<evidence type="ECO:0000250" key="1">
    <source>
        <dbReference type="UniProtKB" id="P03950"/>
    </source>
</evidence>
<evidence type="ECO:0000250" key="2">
    <source>
        <dbReference type="UniProtKB" id="P21570"/>
    </source>
</evidence>
<evidence type="ECO:0000305" key="3"/>
<comment type="function">
    <text evidence="1 2">Secreted ribonuclease that can either promote or restrict cell proliferation of target cells, depending on the context. Endocytosed in target cells via its receptor PLXNB2 and translocates to the cytoplasm or nucleus. Under stress conditions, localizes to the cytoplasm and promotes the assembly of stress granules (SGs): specifically cleaves a subset of tRNAs within anticodon loops to produce tRNA-derived stress-induced fragments (tiRNAs), resulting in translation repression and inhibition of cell proliferation (By similarity). tiRNas also prevent formation of apoptosome, thereby promoting cell survival (By similarity). Preferentially cleaves RNAs between a pyrimidine and an adenosine residue, suggesting that it cleaves the anticodon loop of tRNA(Ala) (32-UUAGCAU-38) after positions 33 and 36. Cleaves a subset of tRNAs, including tRNA(Ala), tRNA(Glu), tRNA(Gly), tRNA(Lys), tRNA(Val), tRNA(His), tRNA(Asp) and tRNA(Sec). Under growth conditions and in differentiated cells, translocates to the nucleus and stimulates ribosomal RNA (rRNA) transcription, including that containing the initiation site sequences of 45S rRNA, thereby promoting cell growth and proliferation. Angiogenin induces vascularization of normal and malignant tissues via its ability to promote rRNA transcription. Involved in hematopoietic stem and progenitor cell (HSPC) growth and survival by promoting rRNA transcription in growth conditions and inhibiting translation in response to stress, respectively. Mediates the crosstalk between myeloid and intestinal epithelial cells to protect the intestinal epithelial barrier integrity: secreted by myeloid cells and promotes intestinal epithelial cells proliferation and survival (By similarity). Also mediates osteoclast-endothelial cell crosstalk in growing bone: produced by osteoclasts and protects the neighboring vascular cells against senescence by promoting rRNA transcription (By similarity).</text>
</comment>
<comment type="activity regulation">
    <text evidence="1">Has weak tRNA ribonuclease activity by itself due to partial autoinhibition by its C-terminus, which folds into a short alpha-helix that partially occludes the substrate-binding site. In absence of stress, the ribonuclease activity is inhibited by RNH1 in the cytoplasm. In response to stress, dissociates from RNH1 in the cytoplasm and associates with cytoplasmic ribosomes with vacant A-sites: ribosomes directly activate the tRNA ribonuclease activity of ANG by refolding the C-terminal alpha-helix. In response to stress, the angiogenic activity of ANG is inhibited by RNH1 in the nucleus.</text>
</comment>
<comment type="subunit">
    <text evidence="1">Homodimer. Interacts with RNH1; inhibiting ANG ribonuclease activity. Interacts with PCNA.</text>
</comment>
<comment type="subcellular location">
    <subcellularLocation>
        <location evidence="1">Secreted</location>
    </subcellularLocation>
    <subcellularLocation>
        <location evidence="1">Nucleus</location>
    </subcellularLocation>
    <subcellularLocation>
        <location evidence="1">Nucleus</location>
        <location evidence="1">Nucleolus</location>
    </subcellularLocation>
    <subcellularLocation>
        <location evidence="1">Cytoplasm</location>
        <location evidence="1">Stress granule</location>
    </subcellularLocation>
    <text evidence="1">The secreted protein is rapidly endocytosed by target cells following interaction with PLXNB2 receptor and translocated to the cytoplasm and nucleus. In the nucleus, accumulates in the nucleolus and binds to DNA.</text>
</comment>
<comment type="similarity">
    <text evidence="3">Belongs to the pancreatic ribonuclease family.</text>
</comment>
<proteinExistence type="inferred from homology"/>
<organism>
    <name type="scientific">Rhinopithecus avunculus</name>
    <name type="common">Tonkin snub-nosed monkey</name>
    <name type="synonym">Pygathrix avunculus</name>
    <dbReference type="NCBI Taxonomy" id="66062"/>
    <lineage>
        <taxon>Eukaryota</taxon>
        <taxon>Metazoa</taxon>
        <taxon>Chordata</taxon>
        <taxon>Craniata</taxon>
        <taxon>Vertebrata</taxon>
        <taxon>Euteleostomi</taxon>
        <taxon>Mammalia</taxon>
        <taxon>Eutheria</taxon>
        <taxon>Euarchontoglires</taxon>
        <taxon>Primates</taxon>
        <taxon>Haplorrhini</taxon>
        <taxon>Catarrhini</taxon>
        <taxon>Cercopithecidae</taxon>
        <taxon>Colobinae</taxon>
        <taxon>Rhinopithecus</taxon>
    </lineage>
</organism>
<sequence length="146" mass="16438">MVMGLGLFLLVFMLGLGLTPPTLAQDNSRYRDFLTKHYDATPQGRNDRYCESMMRRRGLTSPCKDINTFIHGNSRHIKAICGDENGNPYGENLRISKSPFQVTTCNLRGGSSRPPCRYRATAGFRNIVVACENDLPVHLDQSIFRP</sequence>
<reference key="1">
    <citation type="journal article" date="2003" name="Gene">
        <title>Pseudogenization of the tumor-growth promoter angiogenin in a leaf-eating monkey.</title>
        <authorList>
            <person name="Zhang J."/>
            <person name="Zhang Y.-P."/>
        </authorList>
    </citation>
    <scope>NUCLEOTIDE SEQUENCE [GENOMIC DNA]</scope>
</reference>
<dbReference type="EC" id="3.1.27.-" evidence="1"/>
<dbReference type="EMBL" id="AY221132">
    <property type="protein sequence ID" value="AAO41339.1"/>
    <property type="molecule type" value="Genomic_DNA"/>
</dbReference>
<dbReference type="SMR" id="Q861Y1"/>
<dbReference type="GO" id="GO:0032311">
    <property type="term" value="C:angiogenin-PRI complex"/>
    <property type="evidence" value="ECO:0000250"/>
    <property type="project" value="UniProtKB"/>
</dbReference>
<dbReference type="GO" id="GO:0005604">
    <property type="term" value="C:basement membrane"/>
    <property type="evidence" value="ECO:0000250"/>
    <property type="project" value="UniProtKB"/>
</dbReference>
<dbReference type="GO" id="GO:0005737">
    <property type="term" value="C:cytoplasm"/>
    <property type="evidence" value="ECO:0000250"/>
    <property type="project" value="UniProtKB"/>
</dbReference>
<dbReference type="GO" id="GO:0010494">
    <property type="term" value="C:cytoplasmic stress granule"/>
    <property type="evidence" value="ECO:0007669"/>
    <property type="project" value="UniProtKB-SubCell"/>
</dbReference>
<dbReference type="GO" id="GO:0030139">
    <property type="term" value="C:endocytic vesicle"/>
    <property type="evidence" value="ECO:0000250"/>
    <property type="project" value="UniProtKB"/>
</dbReference>
<dbReference type="GO" id="GO:0005615">
    <property type="term" value="C:extracellular space"/>
    <property type="evidence" value="ECO:0000250"/>
    <property type="project" value="UniProtKB"/>
</dbReference>
<dbReference type="GO" id="GO:0005730">
    <property type="term" value="C:nucleolus"/>
    <property type="evidence" value="ECO:0000250"/>
    <property type="project" value="UniProtKB"/>
</dbReference>
<dbReference type="GO" id="GO:0005634">
    <property type="term" value="C:nucleus"/>
    <property type="evidence" value="ECO:0000250"/>
    <property type="project" value="UniProtKB"/>
</dbReference>
<dbReference type="GO" id="GO:0003779">
    <property type="term" value="F:actin binding"/>
    <property type="evidence" value="ECO:0000250"/>
    <property type="project" value="UniProtKB"/>
</dbReference>
<dbReference type="GO" id="GO:0005507">
    <property type="term" value="F:copper ion binding"/>
    <property type="evidence" value="ECO:0000250"/>
    <property type="project" value="UniProtKB"/>
</dbReference>
<dbReference type="GO" id="GO:0003677">
    <property type="term" value="F:DNA binding"/>
    <property type="evidence" value="ECO:0007669"/>
    <property type="project" value="UniProtKB-KW"/>
</dbReference>
<dbReference type="GO" id="GO:0004519">
    <property type="term" value="F:endonuclease activity"/>
    <property type="evidence" value="ECO:0007669"/>
    <property type="project" value="UniProtKB-KW"/>
</dbReference>
<dbReference type="GO" id="GO:0008201">
    <property type="term" value="F:heparin binding"/>
    <property type="evidence" value="ECO:0000250"/>
    <property type="project" value="UniProtKB"/>
</dbReference>
<dbReference type="GO" id="GO:0042803">
    <property type="term" value="F:protein homodimerization activity"/>
    <property type="evidence" value="ECO:0000250"/>
    <property type="project" value="UniProtKB"/>
</dbReference>
<dbReference type="GO" id="GO:0004540">
    <property type="term" value="F:RNA nuclease activity"/>
    <property type="evidence" value="ECO:0000250"/>
    <property type="project" value="UniProtKB"/>
</dbReference>
<dbReference type="GO" id="GO:0005102">
    <property type="term" value="F:signaling receptor binding"/>
    <property type="evidence" value="ECO:0000250"/>
    <property type="project" value="UniProtKB"/>
</dbReference>
<dbReference type="GO" id="GO:0004549">
    <property type="term" value="F:tRNA-specific ribonuclease activity"/>
    <property type="evidence" value="ECO:0000250"/>
    <property type="project" value="UniProtKB"/>
</dbReference>
<dbReference type="GO" id="GO:0030041">
    <property type="term" value="P:actin filament polymerization"/>
    <property type="evidence" value="ECO:0000250"/>
    <property type="project" value="UniProtKB"/>
</dbReference>
<dbReference type="GO" id="GO:0001525">
    <property type="term" value="P:angiogenesis"/>
    <property type="evidence" value="ECO:0000250"/>
    <property type="project" value="UniProtKB"/>
</dbReference>
<dbReference type="GO" id="GO:0019731">
    <property type="term" value="P:antibacterial humoral response"/>
    <property type="evidence" value="ECO:0007669"/>
    <property type="project" value="TreeGrafter"/>
</dbReference>
<dbReference type="GO" id="GO:0061844">
    <property type="term" value="P:antimicrobial humoral immune response mediated by antimicrobial peptide"/>
    <property type="evidence" value="ECO:0007669"/>
    <property type="project" value="TreeGrafter"/>
</dbReference>
<dbReference type="GO" id="GO:0050830">
    <property type="term" value="P:defense response to Gram-positive bacterium"/>
    <property type="evidence" value="ECO:0007669"/>
    <property type="project" value="TreeGrafter"/>
</dbReference>
<dbReference type="GO" id="GO:0071425">
    <property type="term" value="P:hematopoietic stem cell proliferation"/>
    <property type="evidence" value="ECO:0000250"/>
    <property type="project" value="UniProtKB"/>
</dbReference>
<dbReference type="GO" id="GO:0045087">
    <property type="term" value="P:innate immune response"/>
    <property type="evidence" value="ECO:0007669"/>
    <property type="project" value="TreeGrafter"/>
</dbReference>
<dbReference type="GO" id="GO:0043066">
    <property type="term" value="P:negative regulation of apoptotic process"/>
    <property type="evidence" value="ECO:0000250"/>
    <property type="project" value="UniProtKB"/>
</dbReference>
<dbReference type="GO" id="GO:0048662">
    <property type="term" value="P:negative regulation of smooth muscle cell proliferation"/>
    <property type="evidence" value="ECO:0000250"/>
    <property type="project" value="UniProtKB"/>
</dbReference>
<dbReference type="GO" id="GO:0032055">
    <property type="term" value="P:negative regulation of translation in response to stress"/>
    <property type="evidence" value="ECO:0000250"/>
    <property type="project" value="UniProtKB"/>
</dbReference>
<dbReference type="GO" id="GO:0001938">
    <property type="term" value="P:positive regulation of endothelial cell proliferation"/>
    <property type="evidence" value="ECO:0000250"/>
    <property type="project" value="UniProtKB"/>
</dbReference>
<dbReference type="GO" id="GO:0050714">
    <property type="term" value="P:positive regulation of protein secretion"/>
    <property type="evidence" value="ECO:0000250"/>
    <property type="project" value="UniProtKB"/>
</dbReference>
<dbReference type="GO" id="GO:0001666">
    <property type="term" value="P:response to hypoxia"/>
    <property type="evidence" value="ECO:0000250"/>
    <property type="project" value="UniProtKB"/>
</dbReference>
<dbReference type="GO" id="GO:0009303">
    <property type="term" value="P:rRNA transcription"/>
    <property type="evidence" value="ECO:0000250"/>
    <property type="project" value="UniProtKB"/>
</dbReference>
<dbReference type="GO" id="GO:0023052">
    <property type="term" value="P:signaling"/>
    <property type="evidence" value="ECO:0000250"/>
    <property type="project" value="UniProtKB"/>
</dbReference>
<dbReference type="GO" id="GO:0034063">
    <property type="term" value="P:stress granule assembly"/>
    <property type="evidence" value="ECO:0000250"/>
    <property type="project" value="UniProtKB"/>
</dbReference>
<dbReference type="CDD" id="cd06265">
    <property type="entry name" value="RNase_A_canonical"/>
    <property type="match status" value="1"/>
</dbReference>
<dbReference type="FunFam" id="3.10.130.10:FF:000001">
    <property type="entry name" value="Ribonuclease pancreatic"/>
    <property type="match status" value="1"/>
</dbReference>
<dbReference type="Gene3D" id="3.10.130.10">
    <property type="entry name" value="Ribonuclease A-like domain"/>
    <property type="match status" value="1"/>
</dbReference>
<dbReference type="InterPro" id="IPR001427">
    <property type="entry name" value="RNaseA"/>
</dbReference>
<dbReference type="InterPro" id="IPR036816">
    <property type="entry name" value="RNaseA-like_dom_sf"/>
</dbReference>
<dbReference type="InterPro" id="IPR023411">
    <property type="entry name" value="RNaseA_AS"/>
</dbReference>
<dbReference type="InterPro" id="IPR023412">
    <property type="entry name" value="RNaseA_domain"/>
</dbReference>
<dbReference type="PANTHER" id="PTHR11437:SF60">
    <property type="entry name" value="ANGIOGENIN"/>
    <property type="match status" value="1"/>
</dbReference>
<dbReference type="PANTHER" id="PTHR11437">
    <property type="entry name" value="RIBONUCLEASE"/>
    <property type="match status" value="1"/>
</dbReference>
<dbReference type="Pfam" id="PF00074">
    <property type="entry name" value="RnaseA"/>
    <property type="match status" value="1"/>
</dbReference>
<dbReference type="PRINTS" id="PR00794">
    <property type="entry name" value="RIBONUCLEASE"/>
</dbReference>
<dbReference type="SMART" id="SM00092">
    <property type="entry name" value="RNAse_Pc"/>
    <property type="match status" value="1"/>
</dbReference>
<dbReference type="SUPFAM" id="SSF54076">
    <property type="entry name" value="RNase A-like"/>
    <property type="match status" value="1"/>
</dbReference>
<dbReference type="PROSITE" id="PS00127">
    <property type="entry name" value="RNASE_PANCREATIC"/>
    <property type="match status" value="1"/>
</dbReference>
<keyword id="KW-0037">Angiogenesis</keyword>
<keyword id="KW-0963">Cytoplasm</keyword>
<keyword id="KW-0217">Developmental protein</keyword>
<keyword id="KW-0221">Differentiation</keyword>
<keyword id="KW-1015">Disulfide bond</keyword>
<keyword id="KW-0238">DNA-binding</keyword>
<keyword id="KW-0255">Endonuclease</keyword>
<keyword id="KW-0378">Hydrolase</keyword>
<keyword id="KW-0540">Nuclease</keyword>
<keyword id="KW-0539">Nucleus</keyword>
<keyword id="KW-0652">Protein synthesis inhibitor</keyword>
<keyword id="KW-0873">Pyrrolidone carboxylic acid</keyword>
<keyword id="KW-0964">Secreted</keyword>
<keyword id="KW-0732">Signal</keyword>
<keyword id="KW-0346">Stress response</keyword>
<feature type="signal peptide" evidence="1">
    <location>
        <begin position="1"/>
        <end position="24"/>
    </location>
</feature>
<feature type="chain" id="PRO_0000030848" description="Angiogenin">
    <location>
        <begin position="25"/>
        <end position="146"/>
    </location>
</feature>
<feature type="short sequence motif" description="Nucleolar localization signal" evidence="1">
    <location>
        <begin position="55"/>
        <end position="59"/>
    </location>
</feature>
<feature type="active site" description="Proton acceptor" evidence="1">
    <location>
        <position position="37"/>
    </location>
</feature>
<feature type="active site" description="Proton donor" evidence="1">
    <location>
        <position position="138"/>
    </location>
</feature>
<feature type="binding site" evidence="1">
    <location>
        <position position="45"/>
    </location>
    <ligand>
        <name>tRNA</name>
        <dbReference type="ChEBI" id="CHEBI:17843"/>
    </ligand>
</feature>
<feature type="binding site" evidence="1">
    <location>
        <position position="105"/>
    </location>
    <ligand>
        <name>tRNA</name>
        <dbReference type="ChEBI" id="CHEBI:17843"/>
    </ligand>
</feature>
<feature type="binding site" evidence="1">
    <location>
        <position position="127"/>
    </location>
    <ligand>
        <name>tRNA</name>
        <dbReference type="ChEBI" id="CHEBI:17843"/>
    </ligand>
</feature>
<feature type="modified residue" description="Pyrrolidone carboxylic acid" evidence="1">
    <location>
        <position position="25"/>
    </location>
</feature>
<feature type="disulfide bond" evidence="1">
    <location>
        <begin position="50"/>
        <end position="105"/>
    </location>
</feature>
<feature type="disulfide bond" evidence="1">
    <location>
        <begin position="63"/>
        <end position="116"/>
    </location>
</feature>
<feature type="disulfide bond" evidence="1">
    <location>
        <begin position="81"/>
        <end position="131"/>
    </location>
</feature>
<accession>Q861Y1</accession>
<gene>
    <name type="primary">ANG</name>
    <name type="synonym">RNASE5</name>
</gene>
<name>ANGI_RHIAV</name>
<protein>
    <recommendedName>
        <fullName>Angiogenin</fullName>
        <ecNumber evidence="1">3.1.27.-</ecNumber>
    </recommendedName>
    <alternativeName>
        <fullName>Ribonuclease 5</fullName>
        <shortName>RNase 5</shortName>
    </alternativeName>
</protein>